<organism>
    <name type="scientific">Naja sagittifera</name>
    <name type="common">Andaman cobra</name>
    <dbReference type="NCBI Taxonomy" id="195058"/>
    <lineage>
        <taxon>Eukaryota</taxon>
        <taxon>Metazoa</taxon>
        <taxon>Chordata</taxon>
        <taxon>Craniata</taxon>
        <taxon>Vertebrata</taxon>
        <taxon>Euteleostomi</taxon>
        <taxon>Lepidosauria</taxon>
        <taxon>Squamata</taxon>
        <taxon>Bifurcata</taxon>
        <taxon>Unidentata</taxon>
        <taxon>Episquamata</taxon>
        <taxon>Toxicofera</taxon>
        <taxon>Serpentes</taxon>
        <taxon>Colubroidea</taxon>
        <taxon>Elapidae</taxon>
        <taxon>Elapinae</taxon>
        <taxon>Naja</taxon>
    </lineage>
</organism>
<sequence>SNRPMPLNLYQFKNMIQCTVPSRSWQDFADYGCYCGKGGSGTPVDDLDRCCQVHDNCYNEAENISGCRPYFKTYSYECTQGTLTCKGDNNACAASVCDCDRLAAICFAGAPYNDANYNIDLKARCN</sequence>
<accession>P60045</accession>
<keyword id="KW-0002">3D-structure</keyword>
<keyword id="KW-0106">Calcium</keyword>
<keyword id="KW-1015">Disulfide bond</keyword>
<keyword id="KW-0378">Hydrolase</keyword>
<keyword id="KW-0442">Lipid degradation</keyword>
<keyword id="KW-0443">Lipid metabolism</keyword>
<keyword id="KW-0479">Metal-binding</keyword>
<keyword id="KW-0964">Secreted</keyword>
<evidence type="ECO:0000255" key="1">
    <source>
        <dbReference type="PROSITE-ProRule" id="PRU10035"/>
    </source>
</evidence>
<evidence type="ECO:0000255" key="2">
    <source>
        <dbReference type="PROSITE-ProRule" id="PRU10036"/>
    </source>
</evidence>
<evidence type="ECO:0000269" key="3">
    <source>
    </source>
</evidence>
<evidence type="ECO:0000305" key="4"/>
<evidence type="ECO:0000305" key="5">
    <source>
    </source>
</evidence>
<evidence type="ECO:0007744" key="6">
    <source>
        <dbReference type="PDB" id="1OXR"/>
    </source>
</evidence>
<evidence type="ECO:0007829" key="7">
    <source>
        <dbReference type="PDB" id="3JQL"/>
    </source>
</evidence>
<proteinExistence type="evidence at protein level"/>
<feature type="propeptide" id="PRO_0000022928">
    <location>
        <begin position="1" status="less than"/>
        <end position="7"/>
    </location>
</feature>
<feature type="chain" id="PRO_0000022929" description="Acidic phospholipase A2 3">
    <location>
        <begin position="8"/>
        <end position="126"/>
    </location>
</feature>
<feature type="active site" evidence="5">
    <location>
        <position position="54"/>
    </location>
</feature>
<feature type="active site" evidence="5">
    <location>
        <position position="100"/>
    </location>
</feature>
<feature type="binding site" evidence="3 6">
    <location>
        <position position="34"/>
    </location>
    <ligand>
        <name>Ca(2+)</name>
        <dbReference type="ChEBI" id="CHEBI:29108"/>
    </ligand>
</feature>
<feature type="binding site" evidence="3 6">
    <location>
        <position position="36"/>
    </location>
    <ligand>
        <name>Ca(2+)</name>
        <dbReference type="ChEBI" id="CHEBI:29108"/>
    </ligand>
</feature>
<feature type="binding site" evidence="3 6">
    <location>
        <position position="38"/>
    </location>
    <ligand>
        <name>Ca(2+)</name>
        <dbReference type="ChEBI" id="CHEBI:29108"/>
    </ligand>
</feature>
<feature type="binding site" evidence="3 6">
    <location>
        <position position="55"/>
    </location>
    <ligand>
        <name>Ca(2+)</name>
        <dbReference type="ChEBI" id="CHEBI:29108"/>
    </ligand>
</feature>
<feature type="disulfide bond" evidence="3 6">
    <location>
        <begin position="18"/>
        <end position="78"/>
    </location>
</feature>
<feature type="disulfide bond" evidence="3 6">
    <location>
        <begin position="33"/>
        <end position="125"/>
    </location>
</feature>
<feature type="disulfide bond" evidence="3 6">
    <location>
        <begin position="35"/>
        <end position="51"/>
    </location>
</feature>
<feature type="disulfide bond" evidence="3 6">
    <location>
        <begin position="50"/>
        <end position="106"/>
    </location>
</feature>
<feature type="disulfide bond" evidence="3 6">
    <location>
        <begin position="57"/>
        <end position="99"/>
    </location>
</feature>
<feature type="disulfide bond" evidence="3 6">
    <location>
        <begin position="67"/>
        <end position="92"/>
    </location>
</feature>
<feature type="disulfide bond" evidence="3 6">
    <location>
        <begin position="85"/>
        <end position="97"/>
    </location>
</feature>
<feature type="non-terminal residue">
    <location>
        <position position="1"/>
    </location>
</feature>
<feature type="helix" evidence="7">
    <location>
        <begin position="9"/>
        <end position="19"/>
    </location>
</feature>
<feature type="helix" evidence="7">
    <location>
        <begin position="25"/>
        <end position="28"/>
    </location>
</feature>
<feature type="strand" evidence="7">
    <location>
        <begin position="29"/>
        <end position="31"/>
    </location>
</feature>
<feature type="turn" evidence="7">
    <location>
        <begin position="32"/>
        <end position="34"/>
    </location>
</feature>
<feature type="strand" evidence="7">
    <location>
        <begin position="35"/>
        <end position="37"/>
    </location>
</feature>
<feature type="helix" evidence="7">
    <location>
        <begin position="46"/>
        <end position="61"/>
    </location>
</feature>
<feature type="turn" evidence="7">
    <location>
        <begin position="69"/>
        <end position="71"/>
    </location>
</feature>
<feature type="strand" evidence="7">
    <location>
        <begin position="76"/>
        <end position="79"/>
    </location>
</feature>
<feature type="strand" evidence="7">
    <location>
        <begin position="82"/>
        <end position="85"/>
    </location>
</feature>
<feature type="helix" evidence="7">
    <location>
        <begin position="91"/>
        <end position="109"/>
    </location>
</feature>
<feature type="helix" evidence="7">
    <location>
        <begin position="114"/>
        <end position="116"/>
    </location>
</feature>
<feature type="helix" evidence="7">
    <location>
        <begin position="121"/>
        <end position="124"/>
    </location>
</feature>
<reference key="1">
    <citation type="submission" date="2003-10" db="EMBL/GenBank/DDBJ databases">
        <title>Phospholipase A2 isoform 3 from Indian cobra.</title>
        <authorList>
            <person name="Paramasivam M."/>
            <person name="Hariprasad R.G."/>
            <person name="Saravanan K."/>
            <person name="Singh R.K."/>
            <person name="Sharma S."/>
            <person name="Singh T.P."/>
            <person name="Srinivasan A."/>
        </authorList>
    </citation>
    <scope>NUCLEOTIDE SEQUENCE [MRNA]</scope>
    <source>
        <tissue>Venom gland</tissue>
    </source>
</reference>
<reference key="2">
    <citation type="journal article" date="2003" name="Biochemistry">
        <title>Design of specific peptide inhibitors for group I phospholipase A2: structure of a complex formed between phospholipase A2 from Naja naja sagittifera (group I) and a designed peptide inhibitor Val-Ala-Phe-Arg-Ser (VAFRS) at 1.9 A resolution reveals unique features.</title>
        <authorList>
            <person name="Singh R.K."/>
            <person name="Vikram P."/>
            <person name="Makker J."/>
            <person name="Jabeen T."/>
            <person name="Sharma S."/>
            <person name="Dey S."/>
            <person name="Kaur P."/>
            <person name="Srinivasan A."/>
            <person name="Singh T.P."/>
        </authorList>
    </citation>
    <scope>X-RAY CRYSTALLOGRAPHY (1.9 ANGSTROMS) OF 8-126 IN COMPLEX WITH A PEPTIDE INHIBITOR</scope>
</reference>
<reference key="3">
    <citation type="journal article" date="2005" name="J. Drug. Target.">
        <title>Aspirin induces its anti-inflammatory effects through its specific binding to phospholipase A2: crystal structure of the complex formed between phospholipase A2 and aspirin at 1.9 angstroms resolution.</title>
        <authorList>
            <person name="Singh R.K."/>
            <person name="Ethayathulla A.S."/>
            <person name="Jabeen T."/>
            <person name="Sharma S."/>
            <person name="Kaur P."/>
            <person name="Singh T.P."/>
        </authorList>
    </citation>
    <scope>X-RAY CRYSTALLOGRAPHY (1.93 ANGSTROMS) OF 8-125 IN COMPLEX WITH CALCIUM ION AND ACETYLSALICYLIC ACID</scope>
    <scope>COFACTOR</scope>
    <scope>DISULFIDE BONDS</scope>
</reference>
<dbReference type="EC" id="3.1.1.4"/>
<dbReference type="EMBL" id="AY433936">
    <property type="protein sequence ID" value="AAR08048.1"/>
    <property type="molecule type" value="mRNA"/>
</dbReference>
<dbReference type="PDB" id="1LN8">
    <property type="method" value="X-ray"/>
    <property type="resolution" value="1.65 A"/>
    <property type="chains" value="A=8-126"/>
</dbReference>
<dbReference type="PDB" id="1MF4">
    <property type="method" value="X-ray"/>
    <property type="resolution" value="1.90 A"/>
    <property type="chains" value="A=8-126"/>
</dbReference>
<dbReference type="PDB" id="1OXR">
    <property type="method" value="X-ray"/>
    <property type="resolution" value="1.93 A"/>
    <property type="chains" value="A=8-125"/>
</dbReference>
<dbReference type="PDB" id="1SZ8">
    <property type="method" value="X-ray"/>
    <property type="resolution" value="1.50 A"/>
    <property type="chains" value="A=8-126"/>
</dbReference>
<dbReference type="PDB" id="1T37">
    <property type="method" value="X-ray"/>
    <property type="resolution" value="2.60 A"/>
    <property type="chains" value="A=8-125"/>
</dbReference>
<dbReference type="PDB" id="1TD7">
    <property type="method" value="X-ray"/>
    <property type="resolution" value="2.50 A"/>
    <property type="chains" value="A=8-126"/>
</dbReference>
<dbReference type="PDB" id="1YXL">
    <property type="method" value="X-ray"/>
    <property type="resolution" value="1.48 A"/>
    <property type="chains" value="A=8-125"/>
</dbReference>
<dbReference type="PDB" id="1ZM6">
    <property type="method" value="X-ray"/>
    <property type="resolution" value="2.60 A"/>
    <property type="chains" value="A=8-125"/>
</dbReference>
<dbReference type="PDB" id="3GCI">
    <property type="method" value="X-ray"/>
    <property type="resolution" value="2.04 A"/>
    <property type="chains" value="A=8-126"/>
</dbReference>
<dbReference type="PDB" id="3JQ5">
    <property type="method" value="X-ray"/>
    <property type="resolution" value="2.03 A"/>
    <property type="chains" value="A=8-126"/>
</dbReference>
<dbReference type="PDB" id="3JQL">
    <property type="method" value="X-ray"/>
    <property type="resolution" value="1.20 A"/>
    <property type="chains" value="A=8-126"/>
</dbReference>
<dbReference type="PDB" id="3JTI">
    <property type="method" value="X-ray"/>
    <property type="resolution" value="1.80 A"/>
    <property type="chains" value="A=8-126"/>
</dbReference>
<dbReference type="PDB" id="3NJU">
    <property type="method" value="X-ray"/>
    <property type="resolution" value="1.40 A"/>
    <property type="chains" value="A=8-126"/>
</dbReference>
<dbReference type="PDB" id="3OSH">
    <property type="method" value="X-ray"/>
    <property type="resolution" value="1.50 A"/>
    <property type="chains" value="A=8-126"/>
</dbReference>
<dbReference type="PDB" id="3Q4Y">
    <property type="method" value="X-ray"/>
    <property type="resolution" value="2.30 A"/>
    <property type="chains" value="A=8-126"/>
</dbReference>
<dbReference type="PDBsum" id="1LN8"/>
<dbReference type="PDBsum" id="1MF4"/>
<dbReference type="PDBsum" id="1OXR"/>
<dbReference type="PDBsum" id="1SZ8"/>
<dbReference type="PDBsum" id="1T37"/>
<dbReference type="PDBsum" id="1TD7"/>
<dbReference type="PDBsum" id="1YXL"/>
<dbReference type="PDBsum" id="1ZM6"/>
<dbReference type="PDBsum" id="3GCI"/>
<dbReference type="PDBsum" id="3JQ5"/>
<dbReference type="PDBsum" id="3JQL"/>
<dbReference type="PDBsum" id="3JTI"/>
<dbReference type="PDBsum" id="3NJU"/>
<dbReference type="PDBsum" id="3OSH"/>
<dbReference type="PDBsum" id="3Q4Y"/>
<dbReference type="SMR" id="P60045"/>
<dbReference type="DrugCentral" id="P60045"/>
<dbReference type="TopDownProteomics" id="P60045"/>
<dbReference type="EvolutionaryTrace" id="P60045"/>
<dbReference type="GO" id="GO:0005576">
    <property type="term" value="C:extracellular region"/>
    <property type="evidence" value="ECO:0007669"/>
    <property type="project" value="UniProtKB-SubCell"/>
</dbReference>
<dbReference type="GO" id="GO:0005509">
    <property type="term" value="F:calcium ion binding"/>
    <property type="evidence" value="ECO:0007669"/>
    <property type="project" value="InterPro"/>
</dbReference>
<dbReference type="GO" id="GO:0047498">
    <property type="term" value="F:calcium-dependent phospholipase A2 activity"/>
    <property type="evidence" value="ECO:0007669"/>
    <property type="project" value="TreeGrafter"/>
</dbReference>
<dbReference type="GO" id="GO:0005543">
    <property type="term" value="F:phospholipid binding"/>
    <property type="evidence" value="ECO:0007669"/>
    <property type="project" value="TreeGrafter"/>
</dbReference>
<dbReference type="GO" id="GO:0005102">
    <property type="term" value="F:signaling receptor binding"/>
    <property type="evidence" value="ECO:0007669"/>
    <property type="project" value="TreeGrafter"/>
</dbReference>
<dbReference type="GO" id="GO:0050482">
    <property type="term" value="P:arachidonate secretion"/>
    <property type="evidence" value="ECO:0007669"/>
    <property type="project" value="InterPro"/>
</dbReference>
<dbReference type="GO" id="GO:0006633">
    <property type="term" value="P:fatty acid biosynthetic process"/>
    <property type="evidence" value="ECO:0007669"/>
    <property type="project" value="TreeGrafter"/>
</dbReference>
<dbReference type="GO" id="GO:0016042">
    <property type="term" value="P:lipid catabolic process"/>
    <property type="evidence" value="ECO:0007669"/>
    <property type="project" value="UniProtKB-KW"/>
</dbReference>
<dbReference type="GO" id="GO:0006644">
    <property type="term" value="P:phospholipid metabolic process"/>
    <property type="evidence" value="ECO:0007669"/>
    <property type="project" value="InterPro"/>
</dbReference>
<dbReference type="GO" id="GO:0048146">
    <property type="term" value="P:positive regulation of fibroblast proliferation"/>
    <property type="evidence" value="ECO:0007669"/>
    <property type="project" value="TreeGrafter"/>
</dbReference>
<dbReference type="CDD" id="cd00125">
    <property type="entry name" value="PLA2c"/>
    <property type="match status" value="1"/>
</dbReference>
<dbReference type="FunFam" id="1.20.90.10:FF:000007">
    <property type="entry name" value="Acidic phospholipase A2"/>
    <property type="match status" value="1"/>
</dbReference>
<dbReference type="Gene3D" id="1.20.90.10">
    <property type="entry name" value="Phospholipase A2 domain"/>
    <property type="match status" value="1"/>
</dbReference>
<dbReference type="InterPro" id="IPR001211">
    <property type="entry name" value="PLipase_A2"/>
</dbReference>
<dbReference type="InterPro" id="IPR033112">
    <property type="entry name" value="PLipase_A2_Asp_AS"/>
</dbReference>
<dbReference type="InterPro" id="IPR016090">
    <property type="entry name" value="PLipase_A2_dom"/>
</dbReference>
<dbReference type="InterPro" id="IPR036444">
    <property type="entry name" value="PLipase_A2_dom_sf"/>
</dbReference>
<dbReference type="InterPro" id="IPR033113">
    <property type="entry name" value="PLipase_A2_His_AS"/>
</dbReference>
<dbReference type="PANTHER" id="PTHR11716:SF94">
    <property type="entry name" value="PHOSPHOLIPASE A2"/>
    <property type="match status" value="1"/>
</dbReference>
<dbReference type="PANTHER" id="PTHR11716">
    <property type="entry name" value="PHOSPHOLIPASE A2 FAMILY MEMBER"/>
    <property type="match status" value="1"/>
</dbReference>
<dbReference type="Pfam" id="PF00068">
    <property type="entry name" value="Phospholip_A2_1"/>
    <property type="match status" value="1"/>
</dbReference>
<dbReference type="PRINTS" id="PR00389">
    <property type="entry name" value="PHPHLIPASEA2"/>
</dbReference>
<dbReference type="SMART" id="SM00085">
    <property type="entry name" value="PA2c"/>
    <property type="match status" value="1"/>
</dbReference>
<dbReference type="SUPFAM" id="SSF48619">
    <property type="entry name" value="Phospholipase A2, PLA2"/>
    <property type="match status" value="1"/>
</dbReference>
<dbReference type="PROSITE" id="PS00119">
    <property type="entry name" value="PA2_ASP"/>
    <property type="match status" value="1"/>
</dbReference>
<dbReference type="PROSITE" id="PS00118">
    <property type="entry name" value="PA2_HIS"/>
    <property type="match status" value="1"/>
</dbReference>
<name>PA2A3_NAJSG</name>
<comment type="function">
    <text>PLA2 catalyzes the calcium-dependent hydrolysis of the 2-acyl groups in 3-sn-phosphoglycerides.</text>
</comment>
<comment type="catalytic activity">
    <reaction evidence="1 2">
        <text>a 1,2-diacyl-sn-glycero-3-phosphocholine + H2O = a 1-acyl-sn-glycero-3-phosphocholine + a fatty acid + H(+)</text>
        <dbReference type="Rhea" id="RHEA:15801"/>
        <dbReference type="ChEBI" id="CHEBI:15377"/>
        <dbReference type="ChEBI" id="CHEBI:15378"/>
        <dbReference type="ChEBI" id="CHEBI:28868"/>
        <dbReference type="ChEBI" id="CHEBI:57643"/>
        <dbReference type="ChEBI" id="CHEBI:58168"/>
        <dbReference type="EC" id="3.1.1.4"/>
    </reaction>
</comment>
<comment type="cofactor">
    <cofactor evidence="5">
        <name>Ca(2+)</name>
        <dbReference type="ChEBI" id="CHEBI:29108"/>
    </cofactor>
    <text evidence="5">Binds 1 Ca(2+) ion.</text>
</comment>
<comment type="subcellular location">
    <subcellularLocation>
        <location>Secreted</location>
    </subcellularLocation>
</comment>
<comment type="tissue specificity">
    <text>Expressed by the venom gland.</text>
</comment>
<comment type="similarity">
    <text evidence="4">Belongs to the phospholipase A2 family. Group I subfamily. D49 sub-subfamily.</text>
</comment>
<protein>
    <recommendedName>
        <fullName>Acidic phospholipase A2 3</fullName>
        <shortName>svPLA2</shortName>
        <ecNumber>3.1.1.4</ecNumber>
    </recommendedName>
    <alternativeName>
        <fullName>Phosphatidylcholine 2-acylhydrolase</fullName>
    </alternativeName>
</protein>